<dbReference type="EMBL" id="AF296836">
    <property type="status" value="NOT_ANNOTATED_CDS"/>
    <property type="molecule type" value="Genomic_DNA"/>
</dbReference>
<dbReference type="EMBL" id="CP002688">
    <property type="protein sequence ID" value="AED92769.1"/>
    <property type="molecule type" value="Genomic_DNA"/>
</dbReference>
<dbReference type="EMBL" id="AY052240">
    <property type="protein sequence ID" value="AAK97710.1"/>
    <property type="molecule type" value="mRNA"/>
</dbReference>
<dbReference type="EMBL" id="AY060505">
    <property type="protein sequence ID" value="AAL31118.1"/>
    <property type="molecule type" value="mRNA"/>
</dbReference>
<dbReference type="EMBL" id="AY087141">
    <property type="protein sequence ID" value="AAM64699.1"/>
    <property type="molecule type" value="mRNA"/>
</dbReference>
<dbReference type="RefSeq" id="NP_197494.1">
    <molecule id="Q941D3-1"/>
    <property type="nucleotide sequence ID" value="NM_122001.3"/>
</dbReference>
<dbReference type="SMR" id="Q941D3"/>
<dbReference type="FunCoup" id="Q941D3">
    <property type="interactions" value="1276"/>
</dbReference>
<dbReference type="STRING" id="3702.Q941D3"/>
<dbReference type="iPTMnet" id="Q941D3"/>
<dbReference type="PaxDb" id="3702-AT5G19940.1"/>
<dbReference type="ProteomicsDB" id="236835">
    <molecule id="Q941D3-1"/>
</dbReference>
<dbReference type="EnsemblPlants" id="AT5G19940.1">
    <molecule id="Q941D3-1"/>
    <property type="protein sequence ID" value="AT5G19940.1"/>
    <property type="gene ID" value="AT5G19940"/>
</dbReference>
<dbReference type="GeneID" id="832116"/>
<dbReference type="Gramene" id="AT5G19940.1">
    <molecule id="Q941D3-1"/>
    <property type="protein sequence ID" value="AT5G19940.1"/>
    <property type="gene ID" value="AT5G19940"/>
</dbReference>
<dbReference type="KEGG" id="ath:AT5G19940"/>
<dbReference type="Araport" id="AT5G19940"/>
<dbReference type="TAIR" id="AT5G19940">
    <property type="gene designation" value="FBN6"/>
</dbReference>
<dbReference type="eggNOG" id="ENOG502QS7D">
    <property type="taxonomic scope" value="Eukaryota"/>
</dbReference>
<dbReference type="HOGENOM" id="CLU_101145_0_0_1"/>
<dbReference type="InParanoid" id="Q941D3"/>
<dbReference type="OMA" id="WDVLYCS"/>
<dbReference type="PhylomeDB" id="Q941D3"/>
<dbReference type="PRO" id="PR:Q941D3"/>
<dbReference type="Proteomes" id="UP000006548">
    <property type="component" value="Chromosome 5"/>
</dbReference>
<dbReference type="ExpressionAtlas" id="Q941D3">
    <property type="expression patterns" value="baseline and differential"/>
</dbReference>
<dbReference type="GO" id="GO:0009507">
    <property type="term" value="C:chloroplast"/>
    <property type="evidence" value="ECO:0007005"/>
    <property type="project" value="TAIR"/>
</dbReference>
<dbReference type="GO" id="GO:0009941">
    <property type="term" value="C:chloroplast envelope"/>
    <property type="evidence" value="ECO:0007005"/>
    <property type="project" value="TAIR"/>
</dbReference>
<dbReference type="GO" id="GO:0009534">
    <property type="term" value="C:chloroplast thylakoid"/>
    <property type="evidence" value="ECO:0007005"/>
    <property type="project" value="TAIR"/>
</dbReference>
<dbReference type="GO" id="GO:0009536">
    <property type="term" value="C:plastid"/>
    <property type="evidence" value="ECO:0007005"/>
    <property type="project" value="TAIR"/>
</dbReference>
<dbReference type="GO" id="GO:0010287">
    <property type="term" value="C:plastoglobule"/>
    <property type="evidence" value="ECO:0000314"/>
    <property type="project" value="TAIR"/>
</dbReference>
<dbReference type="GO" id="GO:0009579">
    <property type="term" value="C:thylakoid"/>
    <property type="evidence" value="ECO:0000314"/>
    <property type="project" value="TAIR"/>
</dbReference>
<dbReference type="InterPro" id="IPR039633">
    <property type="entry name" value="PAP"/>
</dbReference>
<dbReference type="InterPro" id="IPR006843">
    <property type="entry name" value="PAP/fibrillin_dom"/>
</dbReference>
<dbReference type="PANTHER" id="PTHR31906">
    <property type="entry name" value="PLASTID-LIPID-ASSOCIATED PROTEIN 4, CHLOROPLASTIC-RELATED"/>
    <property type="match status" value="1"/>
</dbReference>
<dbReference type="Pfam" id="PF04755">
    <property type="entry name" value="PAP_fibrillin"/>
    <property type="match status" value="1"/>
</dbReference>
<reference key="1">
    <citation type="journal article" date="2000" name="Nature">
        <title>Sequence and analysis of chromosome 5 of the plant Arabidopsis thaliana.</title>
        <authorList>
            <person name="Tabata S."/>
            <person name="Kaneko T."/>
            <person name="Nakamura Y."/>
            <person name="Kotani H."/>
            <person name="Kato T."/>
            <person name="Asamizu E."/>
            <person name="Miyajima N."/>
            <person name="Sasamoto S."/>
            <person name="Kimura T."/>
            <person name="Hosouchi T."/>
            <person name="Kawashima K."/>
            <person name="Kohara M."/>
            <person name="Matsumoto M."/>
            <person name="Matsuno A."/>
            <person name="Muraki A."/>
            <person name="Nakayama S."/>
            <person name="Nakazaki N."/>
            <person name="Naruo K."/>
            <person name="Okumura S."/>
            <person name="Shinpo S."/>
            <person name="Takeuchi C."/>
            <person name="Wada T."/>
            <person name="Watanabe A."/>
            <person name="Yamada M."/>
            <person name="Yasuda M."/>
            <person name="Sato S."/>
            <person name="de la Bastide M."/>
            <person name="Huang E."/>
            <person name="Spiegel L."/>
            <person name="Gnoj L."/>
            <person name="O'Shaughnessy A."/>
            <person name="Preston R."/>
            <person name="Habermann K."/>
            <person name="Murray J."/>
            <person name="Johnson D."/>
            <person name="Rohlfing T."/>
            <person name="Nelson J."/>
            <person name="Stoneking T."/>
            <person name="Pepin K."/>
            <person name="Spieth J."/>
            <person name="Sekhon M."/>
            <person name="Armstrong J."/>
            <person name="Becker M."/>
            <person name="Belter E."/>
            <person name="Cordum H."/>
            <person name="Cordes M."/>
            <person name="Courtney L."/>
            <person name="Courtney W."/>
            <person name="Dante M."/>
            <person name="Du H."/>
            <person name="Edwards J."/>
            <person name="Fryman J."/>
            <person name="Haakensen B."/>
            <person name="Lamar E."/>
            <person name="Latreille P."/>
            <person name="Leonard S."/>
            <person name="Meyer R."/>
            <person name="Mulvaney E."/>
            <person name="Ozersky P."/>
            <person name="Riley A."/>
            <person name="Strowmatt C."/>
            <person name="Wagner-McPherson C."/>
            <person name="Wollam A."/>
            <person name="Yoakum M."/>
            <person name="Bell M."/>
            <person name="Dedhia N."/>
            <person name="Parnell L."/>
            <person name="Shah R."/>
            <person name="Rodriguez M."/>
            <person name="Hoon See L."/>
            <person name="Vil D."/>
            <person name="Baker J."/>
            <person name="Kirchoff K."/>
            <person name="Toth K."/>
            <person name="King L."/>
            <person name="Bahret A."/>
            <person name="Miller B."/>
            <person name="Marra M.A."/>
            <person name="Martienssen R."/>
            <person name="McCombie W.R."/>
            <person name="Wilson R.K."/>
            <person name="Murphy G."/>
            <person name="Bancroft I."/>
            <person name="Volckaert G."/>
            <person name="Wambutt R."/>
            <person name="Duesterhoeft A."/>
            <person name="Stiekema W."/>
            <person name="Pohl T."/>
            <person name="Entian K.-D."/>
            <person name="Terryn N."/>
            <person name="Hartley N."/>
            <person name="Bent E."/>
            <person name="Johnson S."/>
            <person name="Langham S.-A."/>
            <person name="McCullagh B."/>
            <person name="Robben J."/>
            <person name="Grymonprez B."/>
            <person name="Zimmermann W."/>
            <person name="Ramsperger U."/>
            <person name="Wedler H."/>
            <person name="Balke K."/>
            <person name="Wedler E."/>
            <person name="Peters S."/>
            <person name="van Staveren M."/>
            <person name="Dirkse W."/>
            <person name="Mooijman P."/>
            <person name="Klein Lankhorst R."/>
            <person name="Weitzenegger T."/>
            <person name="Bothe G."/>
            <person name="Rose M."/>
            <person name="Hauf J."/>
            <person name="Berneiser S."/>
            <person name="Hempel S."/>
            <person name="Feldpausch M."/>
            <person name="Lamberth S."/>
            <person name="Villarroel R."/>
            <person name="Gielen J."/>
            <person name="Ardiles W."/>
            <person name="Bents O."/>
            <person name="Lemcke K."/>
            <person name="Kolesov G."/>
            <person name="Mayer K.F.X."/>
            <person name="Rudd S."/>
            <person name="Schoof H."/>
            <person name="Schueller C."/>
            <person name="Zaccaria P."/>
            <person name="Mewes H.-W."/>
            <person name="Bevan M."/>
            <person name="Fransz P.F."/>
        </authorList>
    </citation>
    <scope>NUCLEOTIDE SEQUENCE [LARGE SCALE GENOMIC DNA]</scope>
    <source>
        <strain>cv. Columbia</strain>
    </source>
</reference>
<reference key="2">
    <citation type="journal article" date="2017" name="Plant J.">
        <title>Araport11: a complete reannotation of the Arabidopsis thaliana reference genome.</title>
        <authorList>
            <person name="Cheng C.Y."/>
            <person name="Krishnakumar V."/>
            <person name="Chan A.P."/>
            <person name="Thibaud-Nissen F."/>
            <person name="Schobel S."/>
            <person name="Town C.D."/>
        </authorList>
    </citation>
    <scope>GENOME REANNOTATION</scope>
    <source>
        <strain>cv. Columbia</strain>
    </source>
</reference>
<reference key="3">
    <citation type="journal article" date="2003" name="Science">
        <title>Empirical analysis of transcriptional activity in the Arabidopsis genome.</title>
        <authorList>
            <person name="Yamada K."/>
            <person name="Lim J."/>
            <person name="Dale J.M."/>
            <person name="Chen H."/>
            <person name="Shinn P."/>
            <person name="Palm C.J."/>
            <person name="Southwick A.M."/>
            <person name="Wu H.C."/>
            <person name="Kim C.J."/>
            <person name="Nguyen M."/>
            <person name="Pham P.K."/>
            <person name="Cheuk R.F."/>
            <person name="Karlin-Newmann G."/>
            <person name="Liu S.X."/>
            <person name="Lam B."/>
            <person name="Sakano H."/>
            <person name="Wu T."/>
            <person name="Yu G."/>
            <person name="Miranda M."/>
            <person name="Quach H.L."/>
            <person name="Tripp M."/>
            <person name="Chang C.H."/>
            <person name="Lee J.M."/>
            <person name="Toriumi M.J."/>
            <person name="Chan M.M."/>
            <person name="Tang C.C."/>
            <person name="Onodera C.S."/>
            <person name="Deng J.M."/>
            <person name="Akiyama K."/>
            <person name="Ansari Y."/>
            <person name="Arakawa T."/>
            <person name="Banh J."/>
            <person name="Banno F."/>
            <person name="Bowser L."/>
            <person name="Brooks S.Y."/>
            <person name="Carninci P."/>
            <person name="Chao Q."/>
            <person name="Choy N."/>
            <person name="Enju A."/>
            <person name="Goldsmith A.D."/>
            <person name="Gurjal M."/>
            <person name="Hansen N.F."/>
            <person name="Hayashizaki Y."/>
            <person name="Johnson-Hopson C."/>
            <person name="Hsuan V.W."/>
            <person name="Iida K."/>
            <person name="Karnes M."/>
            <person name="Khan S."/>
            <person name="Koesema E."/>
            <person name="Ishida J."/>
            <person name="Jiang P.X."/>
            <person name="Jones T."/>
            <person name="Kawai J."/>
            <person name="Kamiya A."/>
            <person name="Meyers C."/>
            <person name="Nakajima M."/>
            <person name="Narusaka M."/>
            <person name="Seki M."/>
            <person name="Sakurai T."/>
            <person name="Satou M."/>
            <person name="Tamse R."/>
            <person name="Vaysberg M."/>
            <person name="Wallender E.K."/>
            <person name="Wong C."/>
            <person name="Yamamura Y."/>
            <person name="Yuan S."/>
            <person name="Shinozaki K."/>
            <person name="Davis R.W."/>
            <person name="Theologis A."/>
            <person name="Ecker J.R."/>
        </authorList>
    </citation>
    <scope>NUCLEOTIDE SEQUENCE [LARGE SCALE MRNA]</scope>
    <source>
        <strain>cv. Columbia</strain>
    </source>
</reference>
<reference key="4">
    <citation type="submission" date="2002-03" db="EMBL/GenBank/DDBJ databases">
        <title>Full-length cDNA from Arabidopsis thaliana.</title>
        <authorList>
            <person name="Brover V.V."/>
            <person name="Troukhan M.E."/>
            <person name="Alexandrov N.A."/>
            <person name="Lu Y.-P."/>
            <person name="Flavell R.B."/>
            <person name="Feldmann K.A."/>
        </authorList>
    </citation>
    <scope>NUCLEOTIDE SEQUENCE [LARGE SCALE MRNA]</scope>
</reference>
<reference key="5">
    <citation type="journal article" date="2011" name="Trends Plant Sci.">
        <title>Fibrillin protein function: the tip of the iceberg?</title>
        <authorList>
            <person name="Singh D.K."/>
            <person name="McNellis T.W."/>
        </authorList>
    </citation>
    <scope>GENE FAMILY</scope>
    <scope>NOMENCLATURE</scope>
</reference>
<reference key="6">
    <citation type="journal article" date="2012" name="Mol. Cell. Proteomics">
        <title>Comparative large-scale characterisation of plant vs. mammal proteins reveals similar and idiosyncratic N-alpha acetylation features.</title>
        <authorList>
            <person name="Bienvenut W.V."/>
            <person name="Sumpton D."/>
            <person name="Martinez A."/>
            <person name="Lilla S."/>
            <person name="Espagne C."/>
            <person name="Meinnel T."/>
            <person name="Giglione C."/>
        </authorList>
    </citation>
    <scope>ACETYLATION [LARGE SCALE ANALYSIS] AT SER-53</scope>
    <scope>CLEAVAGE OF TRANSIT PEPTIDE [LARGE SCALE ANALYSIS] AFTER SER-52</scope>
    <scope>IDENTIFICATION BY MASS SPECTROMETRY [LARGE SCALE ANALYSIS]</scope>
</reference>
<reference key="7">
    <citation type="journal article" date="2012" name="Plant Physiol.">
        <title>The functional network of the Arabidopsis plastoglobule proteome based on quantitative proteomics and genome-wide coexpression analysis.</title>
        <authorList>
            <person name="Lundquist P.K."/>
            <person name="Poliakov A."/>
            <person name="Bhuiyan N.H."/>
            <person name="Zybailov B."/>
            <person name="Sun Q."/>
            <person name="van Wijk K.J."/>
        </authorList>
    </citation>
    <scope>SUBCELLULAR LOCATION [LARGE SCALE ANALYSIS]</scope>
    <source>
        <strain>cv. Columbia</strain>
    </source>
</reference>
<accession>Q941D3</accession>
<name>PAP8_ARATH</name>
<keyword id="KW-0007">Acetylation</keyword>
<keyword id="KW-0025">Alternative splicing</keyword>
<keyword id="KW-0150">Chloroplast</keyword>
<keyword id="KW-0934">Plastid</keyword>
<keyword id="KW-1185">Reference proteome</keyword>
<keyword id="KW-0809">Transit peptide</keyword>
<organism>
    <name type="scientific">Arabidopsis thaliana</name>
    <name type="common">Mouse-ear cress</name>
    <dbReference type="NCBI Taxonomy" id="3702"/>
    <lineage>
        <taxon>Eukaryota</taxon>
        <taxon>Viridiplantae</taxon>
        <taxon>Streptophyta</taxon>
        <taxon>Embryophyta</taxon>
        <taxon>Tracheophyta</taxon>
        <taxon>Spermatophyta</taxon>
        <taxon>Magnoliopsida</taxon>
        <taxon>eudicotyledons</taxon>
        <taxon>Gunneridae</taxon>
        <taxon>Pentapetalae</taxon>
        <taxon>rosids</taxon>
        <taxon>malvids</taxon>
        <taxon>Brassicales</taxon>
        <taxon>Brassicaceae</taxon>
        <taxon>Camelineae</taxon>
        <taxon>Arabidopsis</taxon>
    </lineage>
</organism>
<feature type="transit peptide" description="Chloroplast" evidence="3">
    <location>
        <begin position="1"/>
        <end position="52"/>
    </location>
</feature>
<feature type="chain" id="PRO_0000290212" description="Probable plastid-lipid-associated protein 8, chloroplastic">
    <location>
        <begin position="53"/>
        <end position="239"/>
    </location>
</feature>
<feature type="modified residue" description="N-acetylserine" evidence="3">
    <location>
        <position position="53"/>
    </location>
</feature>
<gene>
    <name type="primary">PAP8</name>
    <name type="synonym">FBN6</name>
    <name type="synonym">FIB6</name>
    <name type="ordered locus">At5g19940</name>
    <name type="ORF">F28I16_90</name>
</gene>
<comment type="subcellular location">
    <subcellularLocation>
        <location evidence="1">Plastid</location>
        <location evidence="1">Chloroplast</location>
    </subcellularLocation>
</comment>
<comment type="alternative products">
    <event type="alternative splicing"/>
    <isoform>
        <id>Q941D3-1</id>
        <name>1</name>
        <sequence type="displayed"/>
    </isoform>
    <text>A number of isoforms are produced. According to EST sequences.</text>
</comment>
<comment type="similarity">
    <text evidence="2">Belongs to the PAP/fibrillin family.</text>
</comment>
<proteinExistence type="evidence at protein level"/>
<protein>
    <recommendedName>
        <fullName>Probable plastid-lipid-associated protein 8, chloroplastic</fullName>
    </recommendedName>
    <alternativeName>
        <fullName>Fibrillin-6</fullName>
    </alternativeName>
</protein>
<sequence>MAATASSLTIASSFSEPRTQIHSSRRLNLPLQYSIPYKVLRSRSRRLGLVVSSVSAPNVELRTGPDDLISTLLSKVANSDGGVTLSPEQHKEVAQVAGELQKYCVKEPVKNPLIFGDWEVVYCSRPTSPGGGYRSVIGRLFFKTKEMIQAIDAPDIVRNKVSINAFGFLDGDVSLTGKLKALDSEWVQVIFEPPEIKVGSLEFKYGFESEVKLRITYVDEKLRLGLGSKGSLFVFRRRQ</sequence>
<evidence type="ECO:0000269" key="1">
    <source>
    </source>
</evidence>
<evidence type="ECO:0000305" key="2"/>
<evidence type="ECO:0007744" key="3">
    <source>
    </source>
</evidence>